<organism>
    <name type="scientific">Mycolicibacterium paratuberculosis (strain ATCC BAA-968 / K-10)</name>
    <name type="common">Mycobacterium paratuberculosis</name>
    <dbReference type="NCBI Taxonomy" id="262316"/>
    <lineage>
        <taxon>Bacteria</taxon>
        <taxon>Bacillati</taxon>
        <taxon>Actinomycetota</taxon>
        <taxon>Actinomycetes</taxon>
        <taxon>Mycobacteriales</taxon>
        <taxon>Mycobacteriaceae</taxon>
        <taxon>Mycobacterium</taxon>
        <taxon>Mycobacterium avium complex (MAC)</taxon>
    </lineage>
</organism>
<protein>
    <recommendedName>
        <fullName>Sulfite reductase [ferredoxin] 1</fullName>
        <ecNumber>1.8.7.1</ecNumber>
    </recommendedName>
</protein>
<comment type="function">
    <text evidence="2">Catalyzes the reduction of sulfite to sulfide, a step in the biosynthesis of sulfur-containing amino acids and cofactors.</text>
</comment>
<comment type="catalytic activity">
    <reaction evidence="2">
        <text>hydrogen sulfide + 6 oxidized [2Fe-2S]-[ferredoxin] + 3 H2O = sulfite + 6 reduced [2Fe-2S]-[ferredoxin] + 7 H(+)</text>
        <dbReference type="Rhea" id="RHEA:23132"/>
        <dbReference type="Rhea" id="RHEA-COMP:10000"/>
        <dbReference type="Rhea" id="RHEA-COMP:10001"/>
        <dbReference type="ChEBI" id="CHEBI:15377"/>
        <dbReference type="ChEBI" id="CHEBI:15378"/>
        <dbReference type="ChEBI" id="CHEBI:17359"/>
        <dbReference type="ChEBI" id="CHEBI:29919"/>
        <dbReference type="ChEBI" id="CHEBI:33737"/>
        <dbReference type="ChEBI" id="CHEBI:33738"/>
        <dbReference type="EC" id="1.8.7.1"/>
    </reaction>
</comment>
<comment type="cofactor">
    <cofactor evidence="1">
        <name>siroheme</name>
        <dbReference type="ChEBI" id="CHEBI:60052"/>
    </cofactor>
    <text evidence="1">Binds 1 siroheme per subunit.</text>
</comment>
<comment type="cofactor">
    <cofactor evidence="1">
        <name>[4Fe-4S] cluster</name>
        <dbReference type="ChEBI" id="CHEBI:49883"/>
    </cofactor>
    <text evidence="1">Binds 1 [4Fe-4S] cluster per subunit.</text>
</comment>
<comment type="subunit">
    <text evidence="1">Monomer.</text>
</comment>
<comment type="similarity">
    <text evidence="3">Belongs to the nitrite and sulfite reductase 4Fe-4S domain family.</text>
</comment>
<name>SIR1_MYCPA</name>
<gene>
    <name type="primary">sir1</name>
    <name type="synonym">nirA1</name>
    <name type="ordered locus">MAP_2035</name>
</gene>
<evidence type="ECO:0000250" key="1"/>
<evidence type="ECO:0000250" key="2">
    <source>
        <dbReference type="UniProtKB" id="P9WJ03"/>
    </source>
</evidence>
<evidence type="ECO:0000305" key="3"/>
<keyword id="KW-0004">4Fe-4S</keyword>
<keyword id="KW-0349">Heme</keyword>
<keyword id="KW-0408">Iron</keyword>
<keyword id="KW-0411">Iron-sulfur</keyword>
<keyword id="KW-0479">Metal-binding</keyword>
<keyword id="KW-0560">Oxidoreductase</keyword>
<keyword id="KW-1185">Reference proteome</keyword>
<keyword id="KW-0883">Thioether bond</keyword>
<feature type="chain" id="PRO_0000199950" description="Sulfite reductase [ferredoxin] 1">
    <location>
        <begin position="1"/>
        <end position="555"/>
    </location>
</feature>
<feature type="binding site" evidence="1">
    <location>
        <position position="417"/>
    </location>
    <ligand>
        <name>[4Fe-4S] cluster</name>
        <dbReference type="ChEBI" id="CHEBI:49883"/>
    </ligand>
</feature>
<feature type="binding site" evidence="1">
    <location>
        <position position="423"/>
    </location>
    <ligand>
        <name>[4Fe-4S] cluster</name>
        <dbReference type="ChEBI" id="CHEBI:49883"/>
    </ligand>
</feature>
<feature type="binding site" evidence="1">
    <location>
        <position position="463"/>
    </location>
    <ligand>
        <name>[4Fe-4S] cluster</name>
        <dbReference type="ChEBI" id="CHEBI:49883"/>
    </ligand>
</feature>
<feature type="binding site" evidence="1">
    <location>
        <position position="467"/>
    </location>
    <ligand>
        <name>[4Fe-4S] cluster</name>
        <dbReference type="ChEBI" id="CHEBI:49883"/>
    </ligand>
</feature>
<feature type="binding site" description="axial binding residue" evidence="1">
    <location>
        <position position="467"/>
    </location>
    <ligand>
        <name>siroheme</name>
        <dbReference type="ChEBI" id="CHEBI:60052"/>
    </ligand>
    <ligandPart>
        <name>Fe</name>
        <dbReference type="ChEBI" id="CHEBI:18248"/>
    </ligandPart>
</feature>
<feature type="cross-link" description="3'-(S-cysteinyl)-tyrosine (Tyr-Cys)" evidence="1">
    <location>
        <begin position="69"/>
        <end position="161"/>
    </location>
</feature>
<accession>Q73YC1</accession>
<proteinExistence type="inferred from homology"/>
<dbReference type="EC" id="1.8.7.1"/>
<dbReference type="EMBL" id="AE016958">
    <property type="protein sequence ID" value="AAS04352.1"/>
    <property type="molecule type" value="Genomic_DNA"/>
</dbReference>
<dbReference type="RefSeq" id="WP_003878226.1">
    <property type="nucleotide sequence ID" value="NZ_CP106873.1"/>
</dbReference>
<dbReference type="SMR" id="Q73YC1"/>
<dbReference type="STRING" id="262316.MAP_2035"/>
<dbReference type="KEGG" id="mpa:MAP_2035"/>
<dbReference type="PATRIC" id="fig|262316.17.peg.2157"/>
<dbReference type="eggNOG" id="COG0155">
    <property type="taxonomic scope" value="Bacteria"/>
</dbReference>
<dbReference type="HOGENOM" id="CLU_015667_2_3_11"/>
<dbReference type="Proteomes" id="UP000000580">
    <property type="component" value="Chromosome"/>
</dbReference>
<dbReference type="GO" id="GO:0051539">
    <property type="term" value="F:4 iron, 4 sulfur cluster binding"/>
    <property type="evidence" value="ECO:0007669"/>
    <property type="project" value="UniProtKB-KW"/>
</dbReference>
<dbReference type="GO" id="GO:0020037">
    <property type="term" value="F:heme binding"/>
    <property type="evidence" value="ECO:0007669"/>
    <property type="project" value="InterPro"/>
</dbReference>
<dbReference type="GO" id="GO:0046872">
    <property type="term" value="F:metal ion binding"/>
    <property type="evidence" value="ECO:0007669"/>
    <property type="project" value="UniProtKB-KW"/>
</dbReference>
<dbReference type="GO" id="GO:0050311">
    <property type="term" value="F:sulfite reductase (ferredoxin) activity"/>
    <property type="evidence" value="ECO:0007669"/>
    <property type="project" value="UniProtKB-EC"/>
</dbReference>
<dbReference type="FunFam" id="3.30.413.10:FF:000009">
    <property type="entry name" value="Sulfite reductase [ferredoxin]"/>
    <property type="match status" value="1"/>
</dbReference>
<dbReference type="FunFam" id="3.30.413.10:FF:000013">
    <property type="entry name" value="Sulfite reductase [ferredoxin]"/>
    <property type="match status" value="1"/>
</dbReference>
<dbReference type="Gene3D" id="3.90.480.20">
    <property type="match status" value="1"/>
</dbReference>
<dbReference type="Gene3D" id="3.30.413.10">
    <property type="entry name" value="Sulfite Reductase Hemoprotein, domain 1"/>
    <property type="match status" value="2"/>
</dbReference>
<dbReference type="InterPro" id="IPR051329">
    <property type="entry name" value="NIR_SIR_4Fe-4S"/>
</dbReference>
<dbReference type="InterPro" id="IPR005117">
    <property type="entry name" value="NiRdtase/SiRdtase_haem-b_fer"/>
</dbReference>
<dbReference type="InterPro" id="IPR036136">
    <property type="entry name" value="Nit/Sulf_reduc_fer-like_dom_sf"/>
</dbReference>
<dbReference type="InterPro" id="IPR006067">
    <property type="entry name" value="NO2/SO3_Rdtase_4Fe4S_dom"/>
</dbReference>
<dbReference type="InterPro" id="IPR045854">
    <property type="entry name" value="NO2/SO3_Rdtase_4Fe4S_sf"/>
</dbReference>
<dbReference type="InterPro" id="IPR006066">
    <property type="entry name" value="NO2/SO3_Rdtase_FeS/sirohaem_BS"/>
</dbReference>
<dbReference type="PANTHER" id="PTHR32439">
    <property type="entry name" value="FERREDOXIN--NITRITE REDUCTASE, CHLOROPLASTIC"/>
    <property type="match status" value="1"/>
</dbReference>
<dbReference type="PANTHER" id="PTHR32439:SF0">
    <property type="entry name" value="FERREDOXIN--NITRITE REDUCTASE, CHLOROPLASTIC"/>
    <property type="match status" value="1"/>
</dbReference>
<dbReference type="Pfam" id="PF01077">
    <property type="entry name" value="NIR_SIR"/>
    <property type="match status" value="2"/>
</dbReference>
<dbReference type="Pfam" id="PF03460">
    <property type="entry name" value="NIR_SIR_ferr"/>
    <property type="match status" value="2"/>
</dbReference>
<dbReference type="PRINTS" id="PR00397">
    <property type="entry name" value="SIROHAEM"/>
</dbReference>
<dbReference type="SUPFAM" id="SSF56014">
    <property type="entry name" value="Nitrite and sulphite reductase 4Fe-4S domain-like"/>
    <property type="match status" value="2"/>
</dbReference>
<dbReference type="SUPFAM" id="SSF55124">
    <property type="entry name" value="Nitrite/Sulfite reductase N-terminal domain-like"/>
    <property type="match status" value="2"/>
</dbReference>
<dbReference type="PROSITE" id="PS00365">
    <property type="entry name" value="NIR_SIR"/>
    <property type="match status" value="1"/>
</dbReference>
<reference key="1">
    <citation type="journal article" date="2005" name="Proc. Natl. Acad. Sci. U.S.A.">
        <title>The complete genome sequence of Mycobacterium avium subspecies paratuberculosis.</title>
        <authorList>
            <person name="Li L."/>
            <person name="Bannantine J.P."/>
            <person name="Zhang Q."/>
            <person name="Amonsin A."/>
            <person name="May B.J."/>
            <person name="Alt D."/>
            <person name="Banerji N."/>
            <person name="Kanjilal S."/>
            <person name="Kapur V."/>
        </authorList>
    </citation>
    <scope>NUCLEOTIDE SEQUENCE [LARGE SCALE GENOMIC DNA]</scope>
    <source>
        <strain>ATCC BAA-968 / K-10</strain>
    </source>
</reference>
<sequence length="555" mass="62149">MTTARPVKTRNEGQWALGDREPLNDTEKIKLADGPLNVRERIINVYAKQGFDSIDKSDLRGRFRWMGLYTQREQGYDGSWTGDDNTDKIEAKYFMMRVRSDGKAMSAHTMRTLGQISTEFARDTADISDRENLQLHWIRIEDVPEIWRRLESVGLQTTEACGDCPRGIHGSPLAGDSLDEVLDPSPAIEEIVRRSLNNPEYANLPRKYKTAVSGLQDVSHETHDVAFVGVEHPEHGPGLDLWVGGGLSTNPMLAQRLSVWVPLDEVPDVWEAVTQLFRDYGYRRLRAKARLKFLVKDWGIEKFREILEQEYLNRRLIDGPAPAPVKHTIDHVGVQKIKNGLNAVGVAPIAGRVSGTTLSAVADLMEQVGSDRARWTPFQKLVILDVPDDKVDELVTGLDALGLPSRPSSWRKNTMACTGIEFCKLSFAETRVRTQTLVPELERRLADVDAQLDAPISVHLNGCPNSCARIQVADIGFKGQWIDNGDGTSVEGFQVHLGGGLGEQSGFGRKLRQHKVTSEELGDYIDRVTRKYLEGRNDGETFASWALRADEEELR</sequence>